<keyword id="KW-0067">ATP-binding</keyword>
<keyword id="KW-0342">GTP-binding</keyword>
<keyword id="KW-0547">Nucleotide-binding</keyword>
<evidence type="ECO:0000255" key="1">
    <source>
        <dbReference type="HAMAP-Rule" id="MF_00636"/>
    </source>
</evidence>
<reference key="1">
    <citation type="submission" date="2006-12" db="EMBL/GenBank/DDBJ databases">
        <title>Complete sequence of Shewanella sp. W3-18-1.</title>
        <authorList>
            <consortium name="US DOE Joint Genome Institute"/>
            <person name="Copeland A."/>
            <person name="Lucas S."/>
            <person name="Lapidus A."/>
            <person name="Barry K."/>
            <person name="Detter J.C."/>
            <person name="Glavina del Rio T."/>
            <person name="Hammon N."/>
            <person name="Israni S."/>
            <person name="Dalin E."/>
            <person name="Tice H."/>
            <person name="Pitluck S."/>
            <person name="Chain P."/>
            <person name="Malfatti S."/>
            <person name="Shin M."/>
            <person name="Vergez L."/>
            <person name="Schmutz J."/>
            <person name="Larimer F."/>
            <person name="Land M."/>
            <person name="Hauser L."/>
            <person name="Kyrpides N."/>
            <person name="Lykidis A."/>
            <person name="Tiedje J."/>
            <person name="Richardson P."/>
        </authorList>
    </citation>
    <scope>NUCLEOTIDE SEQUENCE [LARGE SCALE GENOMIC DNA]</scope>
    <source>
        <strain>W3-18-1</strain>
    </source>
</reference>
<proteinExistence type="inferred from homology"/>
<protein>
    <recommendedName>
        <fullName evidence="1">Nucleotide-binding protein Sputw3181_3461</fullName>
    </recommendedName>
</protein>
<dbReference type="EMBL" id="CP000503">
    <property type="protein sequence ID" value="ABM26273.1"/>
    <property type="molecule type" value="Genomic_DNA"/>
</dbReference>
<dbReference type="SMR" id="A1RNM8"/>
<dbReference type="KEGG" id="shw:Sputw3181_3461"/>
<dbReference type="HOGENOM" id="CLU_059558_1_1_6"/>
<dbReference type="Proteomes" id="UP000002597">
    <property type="component" value="Chromosome"/>
</dbReference>
<dbReference type="GO" id="GO:0005524">
    <property type="term" value="F:ATP binding"/>
    <property type="evidence" value="ECO:0007669"/>
    <property type="project" value="UniProtKB-UniRule"/>
</dbReference>
<dbReference type="GO" id="GO:0005525">
    <property type="term" value="F:GTP binding"/>
    <property type="evidence" value="ECO:0007669"/>
    <property type="project" value="UniProtKB-UniRule"/>
</dbReference>
<dbReference type="HAMAP" id="MF_00636">
    <property type="entry name" value="RapZ_like"/>
    <property type="match status" value="1"/>
</dbReference>
<dbReference type="InterPro" id="IPR027417">
    <property type="entry name" value="P-loop_NTPase"/>
</dbReference>
<dbReference type="InterPro" id="IPR005337">
    <property type="entry name" value="RapZ-like"/>
</dbReference>
<dbReference type="InterPro" id="IPR053930">
    <property type="entry name" value="RapZ-like_N"/>
</dbReference>
<dbReference type="InterPro" id="IPR053931">
    <property type="entry name" value="RapZ_C"/>
</dbReference>
<dbReference type="NCBIfam" id="NF003828">
    <property type="entry name" value="PRK05416.1"/>
    <property type="match status" value="1"/>
</dbReference>
<dbReference type="PANTHER" id="PTHR30448">
    <property type="entry name" value="RNASE ADAPTER PROTEIN RAPZ"/>
    <property type="match status" value="1"/>
</dbReference>
<dbReference type="PANTHER" id="PTHR30448:SF0">
    <property type="entry name" value="RNASE ADAPTER PROTEIN RAPZ"/>
    <property type="match status" value="1"/>
</dbReference>
<dbReference type="Pfam" id="PF22740">
    <property type="entry name" value="PapZ_C"/>
    <property type="match status" value="1"/>
</dbReference>
<dbReference type="Pfam" id="PF03668">
    <property type="entry name" value="RapZ-like_N"/>
    <property type="match status" value="1"/>
</dbReference>
<dbReference type="PIRSF" id="PIRSF005052">
    <property type="entry name" value="P-loopkin"/>
    <property type="match status" value="1"/>
</dbReference>
<dbReference type="SUPFAM" id="SSF52540">
    <property type="entry name" value="P-loop containing nucleoside triphosphate hydrolases"/>
    <property type="match status" value="1"/>
</dbReference>
<accession>A1RNM8</accession>
<name>Y3461_SHESW</name>
<sequence>MKLVIVSGRSGSGKSVALRVLEDLGYYCVDNLPLPLIGSLLEQLKGSNDLVAISVDVRNMPEQDKVLVQQLSNLPAGTEITSFFLNSSDKVLLKRYSETRRLHPLSKSRVSLQEAIKLEGKLLEPMSKLVDHYIDTSNLNIYDLSDQVRQILLGSVDKELVIYFESFGFKNGMPTEADFMFDVRFLPNPHWELALRPLTGLDEPVAEFLNRQPLVNKFIWQIENLLETWLPHLERNNRSYLTIAIGCTGGQHRSVYVAEQLAKRFSNGKHKVNVRHRELDHAKA</sequence>
<organism>
    <name type="scientific">Shewanella sp. (strain W3-18-1)</name>
    <dbReference type="NCBI Taxonomy" id="351745"/>
    <lineage>
        <taxon>Bacteria</taxon>
        <taxon>Pseudomonadati</taxon>
        <taxon>Pseudomonadota</taxon>
        <taxon>Gammaproteobacteria</taxon>
        <taxon>Alteromonadales</taxon>
        <taxon>Shewanellaceae</taxon>
        <taxon>Shewanella</taxon>
    </lineage>
</organism>
<feature type="chain" id="PRO_1000056861" description="Nucleotide-binding protein Sputw3181_3461">
    <location>
        <begin position="1"/>
        <end position="284"/>
    </location>
</feature>
<feature type="binding site" evidence="1">
    <location>
        <begin position="8"/>
        <end position="15"/>
    </location>
    <ligand>
        <name>ATP</name>
        <dbReference type="ChEBI" id="CHEBI:30616"/>
    </ligand>
</feature>
<feature type="binding site" evidence="1">
    <location>
        <begin position="56"/>
        <end position="59"/>
    </location>
    <ligand>
        <name>GTP</name>
        <dbReference type="ChEBI" id="CHEBI:37565"/>
    </ligand>
</feature>
<gene>
    <name type="ordered locus">Sputw3181_3461</name>
</gene>
<comment type="function">
    <text evidence="1">Displays ATPase and GTPase activities.</text>
</comment>
<comment type="similarity">
    <text evidence="1">Belongs to the RapZ-like family.</text>
</comment>